<proteinExistence type="inferred from homology"/>
<name>SODC_SALTY</name>
<protein>
    <recommendedName>
        <fullName>Superoxide dismutase [Cu-Zn] 2</fullName>
        <ecNumber>1.15.1.1</ecNumber>
    </recommendedName>
    <alternativeName>
        <fullName>SodCII</fullName>
    </alternativeName>
</protein>
<keyword id="KW-0049">Antioxidant</keyword>
<keyword id="KW-0186">Copper</keyword>
<keyword id="KW-1015">Disulfide bond</keyword>
<keyword id="KW-0479">Metal-binding</keyword>
<keyword id="KW-0560">Oxidoreductase</keyword>
<keyword id="KW-0574">Periplasm</keyword>
<keyword id="KW-1185">Reference proteome</keyword>
<keyword id="KW-0732">Signal</keyword>
<keyword id="KW-0862">Zinc</keyword>
<organism>
    <name type="scientific">Salmonella typhimurium (strain LT2 / SGSC1412 / ATCC 700720)</name>
    <dbReference type="NCBI Taxonomy" id="99287"/>
    <lineage>
        <taxon>Bacteria</taxon>
        <taxon>Pseudomonadati</taxon>
        <taxon>Pseudomonadota</taxon>
        <taxon>Gammaproteobacteria</taxon>
        <taxon>Enterobacterales</taxon>
        <taxon>Enterobacteriaceae</taxon>
        <taxon>Salmonella</taxon>
    </lineage>
</organism>
<accession>O68901</accession>
<gene>
    <name type="primary">sodC</name>
    <name type="synonym">sodC2</name>
    <name type="ordered locus">STM1440</name>
</gene>
<comment type="function">
    <text evidence="1">Destroys radicals which are normally produced within the cells and which are toxic to biological systems.</text>
</comment>
<comment type="catalytic activity">
    <reaction>
        <text>2 superoxide + 2 H(+) = H2O2 + O2</text>
        <dbReference type="Rhea" id="RHEA:20696"/>
        <dbReference type="ChEBI" id="CHEBI:15378"/>
        <dbReference type="ChEBI" id="CHEBI:15379"/>
        <dbReference type="ChEBI" id="CHEBI:16240"/>
        <dbReference type="ChEBI" id="CHEBI:18421"/>
        <dbReference type="EC" id="1.15.1.1"/>
    </reaction>
</comment>
<comment type="cofactor">
    <cofactor evidence="1">
        <name>Cu cation</name>
        <dbReference type="ChEBI" id="CHEBI:23378"/>
    </cofactor>
    <text evidence="1">Binds 1 copper ion per subunit.</text>
</comment>
<comment type="cofactor">
    <cofactor evidence="1">
        <name>Zn(2+)</name>
        <dbReference type="ChEBI" id="CHEBI:29105"/>
    </cofactor>
    <text evidence="1">Binds 1 zinc ion per subunit.</text>
</comment>
<comment type="subunit">
    <text evidence="1">Monomer.</text>
</comment>
<comment type="subcellular location">
    <subcellularLocation>
        <location evidence="1">Periplasm</location>
    </subcellularLocation>
</comment>
<comment type="similarity">
    <text evidence="2">Belongs to the Cu-Zn superoxide dismutase family.</text>
</comment>
<reference key="1">
    <citation type="journal article" date="1999" name="Proc. Natl. Acad. Sci. U.S.A.">
        <title>Virulent Salmonella typhimurium has two periplasmic Cu,Zn-superoxide dismutases.</title>
        <authorList>
            <person name="Fang F.C."/>
            <person name="DeGroote M.A."/>
            <person name="Foster J.W."/>
            <person name="Baumler A.J."/>
            <person name="Ochsner U."/>
            <person name="Testerman T."/>
            <person name="Bearson S."/>
            <person name="Giard J.-C."/>
            <person name="Xu Y."/>
            <person name="Campbell G."/>
            <person name="Laessig T."/>
        </authorList>
    </citation>
    <scope>NUCLEOTIDE SEQUENCE [GENOMIC DNA]</scope>
    <source>
        <strain>ATCC 14028s / SGSG 2262</strain>
    </source>
</reference>
<reference key="2">
    <citation type="journal article" date="2001" name="Nature">
        <title>Complete genome sequence of Salmonella enterica serovar Typhimurium LT2.</title>
        <authorList>
            <person name="McClelland M."/>
            <person name="Sanderson K.E."/>
            <person name="Spieth J."/>
            <person name="Clifton S.W."/>
            <person name="Latreille P."/>
            <person name="Courtney L."/>
            <person name="Porwollik S."/>
            <person name="Ali J."/>
            <person name="Dante M."/>
            <person name="Du F."/>
            <person name="Hou S."/>
            <person name="Layman D."/>
            <person name="Leonard S."/>
            <person name="Nguyen C."/>
            <person name="Scott K."/>
            <person name="Holmes A."/>
            <person name="Grewal N."/>
            <person name="Mulvaney E."/>
            <person name="Ryan E."/>
            <person name="Sun H."/>
            <person name="Florea L."/>
            <person name="Miller W."/>
            <person name="Stoneking T."/>
            <person name="Nhan M."/>
            <person name="Waterston R."/>
            <person name="Wilson R.K."/>
        </authorList>
    </citation>
    <scope>NUCLEOTIDE SEQUENCE [LARGE SCALE GENOMIC DNA]</scope>
    <source>
        <strain>LT2 / SGSC1412 / ATCC 700720</strain>
    </source>
</reference>
<sequence length="173" mass="17737">MKRLSLAMVTLLACAGAQAASEKVEMNLVTAQGVGQSIGTVVIDETEGGLKFTPHLKALPPGEHGFHIHANGSCQPAIKDGKAVAAEAAGGHLDPQNTGKHEGPEGQGHLGDLPVLVVNNDGIASEPVTAPRLKSLDEVKDKALMIHVGGDNMSDQPKPLGGGGMRYACGVIK</sequence>
<dbReference type="EC" id="1.15.1.1"/>
<dbReference type="EMBL" id="AF056931">
    <property type="protein sequence ID" value="AAC13559.1"/>
    <property type="molecule type" value="Genomic_DNA"/>
</dbReference>
<dbReference type="EMBL" id="AE006468">
    <property type="protein sequence ID" value="AAL20362.1"/>
    <property type="molecule type" value="Genomic_DNA"/>
</dbReference>
<dbReference type="RefSeq" id="NP_460403.1">
    <property type="nucleotide sequence ID" value="NC_003197.2"/>
</dbReference>
<dbReference type="RefSeq" id="WP_000826819.1">
    <property type="nucleotide sequence ID" value="NC_003197.2"/>
</dbReference>
<dbReference type="BMRB" id="O68901"/>
<dbReference type="SMR" id="O68901"/>
<dbReference type="STRING" id="99287.STM1440"/>
<dbReference type="PaxDb" id="99287-STM1440"/>
<dbReference type="GeneID" id="1252958"/>
<dbReference type="KEGG" id="stm:STM1440"/>
<dbReference type="PATRIC" id="fig|99287.12.peg.1523"/>
<dbReference type="HOGENOM" id="CLU_056632_7_1_6"/>
<dbReference type="OMA" id="GARYACG"/>
<dbReference type="PhylomeDB" id="O68901"/>
<dbReference type="BioCyc" id="SENT99287:STM1440-MONOMER"/>
<dbReference type="PHI-base" id="PHI:11379"/>
<dbReference type="PHI-base" id="PHI:9809"/>
<dbReference type="Proteomes" id="UP000001014">
    <property type="component" value="Chromosome"/>
</dbReference>
<dbReference type="GO" id="GO:0042597">
    <property type="term" value="C:periplasmic space"/>
    <property type="evidence" value="ECO:0000318"/>
    <property type="project" value="GO_Central"/>
</dbReference>
<dbReference type="GO" id="GO:0005507">
    <property type="term" value="F:copper ion binding"/>
    <property type="evidence" value="ECO:0000318"/>
    <property type="project" value="GO_Central"/>
</dbReference>
<dbReference type="GO" id="GO:0004784">
    <property type="term" value="F:superoxide dismutase activity"/>
    <property type="evidence" value="ECO:0000318"/>
    <property type="project" value="GO_Central"/>
</dbReference>
<dbReference type="GO" id="GO:0019430">
    <property type="term" value="P:removal of superoxide radicals"/>
    <property type="evidence" value="ECO:0000318"/>
    <property type="project" value="GO_Central"/>
</dbReference>
<dbReference type="CDD" id="cd00305">
    <property type="entry name" value="Cu-Zn_Superoxide_Dismutase"/>
    <property type="match status" value="1"/>
</dbReference>
<dbReference type="FunFam" id="2.60.40.200:FF:000002">
    <property type="entry name" value="Superoxide dismutase [Cu-Zn]"/>
    <property type="match status" value="1"/>
</dbReference>
<dbReference type="Gene3D" id="2.60.40.200">
    <property type="entry name" value="Superoxide dismutase, copper/zinc binding domain"/>
    <property type="match status" value="1"/>
</dbReference>
<dbReference type="InterPro" id="IPR036423">
    <property type="entry name" value="SOD-like_Cu/Zn_dom_sf"/>
</dbReference>
<dbReference type="InterPro" id="IPR024134">
    <property type="entry name" value="SOD_Cu/Zn_/chaperone"/>
</dbReference>
<dbReference type="InterPro" id="IPR018152">
    <property type="entry name" value="SOD_Cu/Zn_BS"/>
</dbReference>
<dbReference type="InterPro" id="IPR001424">
    <property type="entry name" value="SOD_Cu_Zn_dom"/>
</dbReference>
<dbReference type="NCBIfam" id="NF007628">
    <property type="entry name" value="PRK10290.1"/>
    <property type="match status" value="1"/>
</dbReference>
<dbReference type="PANTHER" id="PTHR10003">
    <property type="entry name" value="SUPEROXIDE DISMUTASE CU-ZN -RELATED"/>
    <property type="match status" value="1"/>
</dbReference>
<dbReference type="Pfam" id="PF00080">
    <property type="entry name" value="Sod_Cu"/>
    <property type="match status" value="1"/>
</dbReference>
<dbReference type="SUPFAM" id="SSF49329">
    <property type="entry name" value="Cu,Zn superoxide dismutase-like"/>
    <property type="match status" value="1"/>
</dbReference>
<dbReference type="PROSITE" id="PS00332">
    <property type="entry name" value="SOD_CU_ZN_2"/>
    <property type="match status" value="1"/>
</dbReference>
<feature type="signal peptide" evidence="1">
    <location>
        <begin position="1"/>
        <end position="19"/>
    </location>
</feature>
<feature type="chain" id="PRO_0000032825" description="Superoxide dismutase [Cu-Zn] 2">
    <location>
        <begin position="20"/>
        <end position="173"/>
    </location>
</feature>
<feature type="binding site" evidence="1">
    <location>
        <position position="67"/>
    </location>
    <ligand>
        <name>Cu cation</name>
        <dbReference type="ChEBI" id="CHEBI:23378"/>
        <note>catalytic</note>
    </ligand>
</feature>
<feature type="binding site" evidence="1">
    <location>
        <position position="69"/>
    </location>
    <ligand>
        <name>Cu cation</name>
        <dbReference type="ChEBI" id="CHEBI:23378"/>
        <note>catalytic</note>
    </ligand>
</feature>
<feature type="binding site" evidence="1">
    <location>
        <position position="92"/>
    </location>
    <ligand>
        <name>Cu cation</name>
        <dbReference type="ChEBI" id="CHEBI:23378"/>
        <note>catalytic</note>
    </ligand>
</feature>
<feature type="binding site" evidence="1">
    <location>
        <position position="92"/>
    </location>
    <ligand>
        <name>Zn(2+)</name>
        <dbReference type="ChEBI" id="CHEBI:29105"/>
        <note>structural</note>
    </ligand>
</feature>
<feature type="binding site" evidence="1">
    <location>
        <position position="101"/>
    </location>
    <ligand>
        <name>Zn(2+)</name>
        <dbReference type="ChEBI" id="CHEBI:29105"/>
        <note>structural</note>
    </ligand>
</feature>
<feature type="binding site" evidence="1">
    <location>
        <position position="109"/>
    </location>
    <ligand>
        <name>Zn(2+)</name>
        <dbReference type="ChEBI" id="CHEBI:29105"/>
        <note>structural</note>
    </ligand>
</feature>
<feature type="binding site" evidence="1">
    <location>
        <position position="112"/>
    </location>
    <ligand>
        <name>Zn(2+)</name>
        <dbReference type="ChEBI" id="CHEBI:29105"/>
        <note>structural</note>
    </ligand>
</feature>
<feature type="binding site" evidence="1">
    <location>
        <position position="147"/>
    </location>
    <ligand>
        <name>Cu cation</name>
        <dbReference type="ChEBI" id="CHEBI:23378"/>
        <note>catalytic</note>
    </ligand>
</feature>
<feature type="disulfide bond" evidence="1">
    <location>
        <begin position="74"/>
        <end position="169"/>
    </location>
</feature>
<evidence type="ECO:0000250" key="1"/>
<evidence type="ECO:0000305" key="2"/>